<feature type="chain" id="PRO_0000113490" description="Malate dehydrogenase">
    <location>
        <begin position="1"/>
        <end position="324"/>
    </location>
</feature>
<feature type="active site" description="Proton acceptor" evidence="2">
    <location>
        <position position="181"/>
    </location>
</feature>
<feature type="binding site" evidence="1">
    <location>
        <begin position="10"/>
        <end position="15"/>
    </location>
    <ligand>
        <name>NAD(+)</name>
        <dbReference type="ChEBI" id="CHEBI:57540"/>
    </ligand>
</feature>
<feature type="binding site" evidence="1">
    <location>
        <position position="34"/>
    </location>
    <ligand>
        <name>NAD(+)</name>
        <dbReference type="ChEBI" id="CHEBI:57540"/>
    </ligand>
</feature>
<feature type="binding site" evidence="2">
    <location>
        <position position="88"/>
    </location>
    <ligand>
        <name>substrate</name>
    </ligand>
</feature>
<feature type="binding site" evidence="2">
    <location>
        <position position="94"/>
    </location>
    <ligand>
        <name>substrate</name>
    </ligand>
</feature>
<feature type="binding site" evidence="1">
    <location>
        <position position="101"/>
    </location>
    <ligand>
        <name>NAD(+)</name>
        <dbReference type="ChEBI" id="CHEBI:57540"/>
    </ligand>
</feature>
<feature type="binding site" evidence="1">
    <location>
        <begin position="124"/>
        <end position="126"/>
    </location>
    <ligand>
        <name>NAD(+)</name>
        <dbReference type="ChEBI" id="CHEBI:57540"/>
    </ligand>
</feature>
<feature type="binding site" evidence="2">
    <location>
        <position position="126"/>
    </location>
    <ligand>
        <name>substrate</name>
    </ligand>
</feature>
<feature type="binding site" evidence="2">
    <location>
        <position position="157"/>
    </location>
    <ligand>
        <name>substrate</name>
    </ligand>
</feature>
<feature type="strand" evidence="4">
    <location>
        <begin position="5"/>
        <end position="9"/>
    </location>
</feature>
<feature type="helix" evidence="4">
    <location>
        <begin position="13"/>
        <end position="24"/>
    </location>
</feature>
<feature type="strand" evidence="4">
    <location>
        <begin position="28"/>
        <end position="36"/>
    </location>
</feature>
<feature type="helix" evidence="4">
    <location>
        <begin position="39"/>
        <end position="48"/>
    </location>
</feature>
<feature type="helix" evidence="4">
    <location>
        <begin position="51"/>
        <end position="54"/>
    </location>
</feature>
<feature type="strand" evidence="4">
    <location>
        <begin position="60"/>
        <end position="64"/>
    </location>
</feature>
<feature type="helix" evidence="4">
    <location>
        <begin position="68"/>
        <end position="74"/>
    </location>
</feature>
<feature type="strand" evidence="4">
    <location>
        <begin position="78"/>
        <end position="82"/>
    </location>
</feature>
<feature type="helix" evidence="4">
    <location>
        <begin position="94"/>
        <end position="115"/>
    </location>
</feature>
<feature type="strand" evidence="4">
    <location>
        <begin position="120"/>
        <end position="123"/>
    </location>
</feature>
<feature type="strand" evidence="4">
    <location>
        <begin position="125"/>
        <end position="127"/>
    </location>
</feature>
<feature type="helix" evidence="4">
    <location>
        <begin position="128"/>
        <end position="139"/>
    </location>
</feature>
<feature type="helix" evidence="4">
    <location>
        <begin position="143"/>
        <end position="145"/>
    </location>
</feature>
<feature type="strand" evidence="4">
    <location>
        <begin position="146"/>
        <end position="148"/>
    </location>
</feature>
<feature type="helix" evidence="4">
    <location>
        <begin position="151"/>
        <end position="166"/>
    </location>
</feature>
<feature type="helix" evidence="4">
    <location>
        <begin position="170"/>
        <end position="172"/>
    </location>
</feature>
<feature type="strand" evidence="4">
    <location>
        <begin position="173"/>
        <end position="179"/>
    </location>
</feature>
<feature type="helix" evidence="4">
    <location>
        <begin position="182"/>
        <end position="184"/>
    </location>
</feature>
<feature type="strand" evidence="4">
    <location>
        <begin position="185"/>
        <end position="194"/>
    </location>
</feature>
<feature type="helix" evidence="4">
    <location>
        <begin position="199"/>
        <end position="201"/>
    </location>
</feature>
<feature type="helix" evidence="4">
    <location>
        <begin position="205"/>
        <end position="216"/>
    </location>
</feature>
<feature type="helix" evidence="4">
    <location>
        <begin position="218"/>
        <end position="226"/>
    </location>
</feature>
<feature type="strand" evidence="4">
    <location>
        <begin position="227"/>
        <end position="229"/>
    </location>
</feature>
<feature type="helix" evidence="4">
    <location>
        <begin position="233"/>
        <end position="247"/>
    </location>
</feature>
<feature type="strand" evidence="4">
    <location>
        <begin position="252"/>
        <end position="260"/>
    </location>
</feature>
<feature type="helix" evidence="4">
    <location>
        <begin position="263"/>
        <end position="268"/>
    </location>
</feature>
<feature type="strand" evidence="4">
    <location>
        <begin position="272"/>
        <end position="282"/>
    </location>
</feature>
<feature type="strand" evidence="4">
    <location>
        <begin position="285"/>
        <end position="289"/>
    </location>
</feature>
<feature type="helix" evidence="4">
    <location>
        <begin position="296"/>
        <end position="322"/>
    </location>
</feature>
<accession>Q6L0C3</accession>
<organism>
    <name type="scientific">Picrophilus torridus (strain ATCC 700027 / DSM 9790 / JCM 10055 / NBRC 100828 / KAW 2/3)</name>
    <dbReference type="NCBI Taxonomy" id="1122961"/>
    <lineage>
        <taxon>Archaea</taxon>
        <taxon>Methanobacteriati</taxon>
        <taxon>Thermoplasmatota</taxon>
        <taxon>Thermoplasmata</taxon>
        <taxon>Thermoplasmatales</taxon>
        <taxon>Picrophilaceae</taxon>
        <taxon>Picrophilus</taxon>
    </lineage>
</organism>
<protein>
    <recommendedName>
        <fullName evidence="1">Malate dehydrogenase</fullName>
        <ecNumber evidence="1">1.1.1.37</ecNumber>
    </recommendedName>
</protein>
<proteinExistence type="evidence at protein level"/>
<name>MDH_PICTO</name>
<evidence type="ECO:0000250" key="1">
    <source>
        <dbReference type="UniProtKB" id="O08349"/>
    </source>
</evidence>
<evidence type="ECO:0000250" key="2">
    <source>
        <dbReference type="UniProtKB" id="P61889"/>
    </source>
</evidence>
<evidence type="ECO:0000305" key="3"/>
<evidence type="ECO:0007829" key="4">
    <source>
        <dbReference type="PDB" id="4BGV"/>
    </source>
</evidence>
<sequence>MARSKISVIGAGAVGATVAQTLAIRQTGDIYIFDIVDGLAEGKALDILEGAPHWGYDLDIKGFCTADESKYAEMKGSDVIVVTAGLARKPGMSRDDLLLKNIGIMKSVGEAIKKYSPESKIVVVTNPADIMAYAIYKASGISPERIIGLGGSLDSTRFRTFLAQELNVSFEDVNAFVIGGHGDDMVPFIRYSNVSGIPIEDLLPREKIDEIVKRTRFGGGEIVNLYKTGSAFYAPGISIAVMVESIVNDRKRVIPCAAYITGEHSKTYLVNNLFIGVPIKIGKNGVEKIYDLKFNEDELEAWKKSVESVKKNSAIADDYFAKNQ</sequence>
<reference key="1">
    <citation type="journal article" date="2004" name="Proc. Natl. Acad. Sci. U.S.A.">
        <title>Genome sequence of Picrophilus torridus and its implications for life around pH 0.</title>
        <authorList>
            <person name="Fuetterer O."/>
            <person name="Angelov A."/>
            <person name="Liesegang H."/>
            <person name="Gottschalk G."/>
            <person name="Schleper C."/>
            <person name="Schepers B."/>
            <person name="Dock C."/>
            <person name="Antranikian G."/>
            <person name="Liebl W."/>
        </authorList>
    </citation>
    <scope>NUCLEOTIDE SEQUENCE [LARGE SCALE GENOMIC DNA]</scope>
    <source>
        <strain>ATCC 700027 / DSM 9790 / JCM 10055 / NBRC 100828 / KAW 2/3</strain>
    </source>
</reference>
<comment type="function">
    <text evidence="1">Catalyzes the reversible oxidation of malate to oxaloacetate.</text>
</comment>
<comment type="catalytic activity">
    <reaction evidence="1">
        <text>(S)-malate + NAD(+) = oxaloacetate + NADH + H(+)</text>
        <dbReference type="Rhea" id="RHEA:21432"/>
        <dbReference type="ChEBI" id="CHEBI:15378"/>
        <dbReference type="ChEBI" id="CHEBI:15589"/>
        <dbReference type="ChEBI" id="CHEBI:16452"/>
        <dbReference type="ChEBI" id="CHEBI:57540"/>
        <dbReference type="ChEBI" id="CHEBI:57945"/>
        <dbReference type="EC" id="1.1.1.37"/>
    </reaction>
</comment>
<comment type="similarity">
    <text evidence="3">Belongs to the LDH/MDH superfamily.</text>
</comment>
<dbReference type="EC" id="1.1.1.37" evidence="1"/>
<dbReference type="EMBL" id="AE017261">
    <property type="protein sequence ID" value="AAT43579.1"/>
    <property type="molecule type" value="Genomic_DNA"/>
</dbReference>
<dbReference type="RefSeq" id="WP_011177795.1">
    <property type="nucleotide sequence ID" value="NC_005877.1"/>
</dbReference>
<dbReference type="PDB" id="4BGV">
    <property type="method" value="X-ray"/>
    <property type="resolution" value="1.81 A"/>
    <property type="chains" value="A/B/C/D=2-324"/>
</dbReference>
<dbReference type="PDBsum" id="4BGV"/>
<dbReference type="SMR" id="Q6L0C3"/>
<dbReference type="FunCoup" id="Q6L0C3">
    <property type="interactions" value="108"/>
</dbReference>
<dbReference type="STRING" id="263820.PTO0994"/>
<dbReference type="PaxDb" id="263820-PTO0994"/>
<dbReference type="GeneID" id="2844444"/>
<dbReference type="KEGG" id="pto:PTO0994"/>
<dbReference type="PATRIC" id="fig|263820.9.peg.1033"/>
<dbReference type="eggNOG" id="arCOG00246">
    <property type="taxonomic scope" value="Archaea"/>
</dbReference>
<dbReference type="HOGENOM" id="CLU_045401_2_1_2"/>
<dbReference type="InParanoid" id="Q6L0C3"/>
<dbReference type="OrthoDB" id="2596at2157"/>
<dbReference type="EvolutionaryTrace" id="Q6L0C3"/>
<dbReference type="Proteomes" id="UP000000438">
    <property type="component" value="Chromosome"/>
</dbReference>
<dbReference type="GO" id="GO:0004459">
    <property type="term" value="F:L-lactate dehydrogenase activity"/>
    <property type="evidence" value="ECO:0007669"/>
    <property type="project" value="TreeGrafter"/>
</dbReference>
<dbReference type="GO" id="GO:0030060">
    <property type="term" value="F:L-malate dehydrogenase (NAD+) activity"/>
    <property type="evidence" value="ECO:0007669"/>
    <property type="project" value="UniProtKB-EC"/>
</dbReference>
<dbReference type="GO" id="GO:0006089">
    <property type="term" value="P:lactate metabolic process"/>
    <property type="evidence" value="ECO:0007669"/>
    <property type="project" value="TreeGrafter"/>
</dbReference>
<dbReference type="GO" id="GO:0006099">
    <property type="term" value="P:tricarboxylic acid cycle"/>
    <property type="evidence" value="ECO:0007669"/>
    <property type="project" value="UniProtKB-KW"/>
</dbReference>
<dbReference type="CDD" id="cd01339">
    <property type="entry name" value="LDH-like_MDH"/>
    <property type="match status" value="1"/>
</dbReference>
<dbReference type="FunFam" id="3.40.50.720:FF:000018">
    <property type="entry name" value="Malate dehydrogenase"/>
    <property type="match status" value="1"/>
</dbReference>
<dbReference type="FunFam" id="3.90.110.10:FF:000004">
    <property type="entry name" value="Malate dehydrogenase"/>
    <property type="match status" value="1"/>
</dbReference>
<dbReference type="Gene3D" id="3.90.110.10">
    <property type="entry name" value="Lactate dehydrogenase/glycoside hydrolase, family 4, C-terminal"/>
    <property type="match status" value="1"/>
</dbReference>
<dbReference type="Gene3D" id="3.40.50.720">
    <property type="entry name" value="NAD(P)-binding Rossmann-like Domain"/>
    <property type="match status" value="1"/>
</dbReference>
<dbReference type="HAMAP" id="MF_00487">
    <property type="entry name" value="Malate_dehydrog_3"/>
    <property type="match status" value="1"/>
</dbReference>
<dbReference type="InterPro" id="IPR001557">
    <property type="entry name" value="L-lactate/malate_DH"/>
</dbReference>
<dbReference type="InterPro" id="IPR022383">
    <property type="entry name" value="Lactate/malate_DH_C"/>
</dbReference>
<dbReference type="InterPro" id="IPR001236">
    <property type="entry name" value="Lactate/malate_DH_N"/>
</dbReference>
<dbReference type="InterPro" id="IPR015955">
    <property type="entry name" value="Lactate_DH/Glyco_Ohase_4_C"/>
</dbReference>
<dbReference type="InterPro" id="IPR011275">
    <property type="entry name" value="Malate_DH_type3"/>
</dbReference>
<dbReference type="InterPro" id="IPR036291">
    <property type="entry name" value="NAD(P)-bd_dom_sf"/>
</dbReference>
<dbReference type="NCBIfam" id="TIGR01763">
    <property type="entry name" value="MalateDH_bact"/>
    <property type="match status" value="1"/>
</dbReference>
<dbReference type="NCBIfam" id="NF004863">
    <property type="entry name" value="PRK06223.1"/>
    <property type="match status" value="1"/>
</dbReference>
<dbReference type="PANTHER" id="PTHR43128">
    <property type="entry name" value="L-2-HYDROXYCARBOXYLATE DEHYDROGENASE (NAD(P)(+))"/>
    <property type="match status" value="1"/>
</dbReference>
<dbReference type="PANTHER" id="PTHR43128:SF16">
    <property type="entry name" value="L-LACTATE DEHYDROGENASE"/>
    <property type="match status" value="1"/>
</dbReference>
<dbReference type="Pfam" id="PF02866">
    <property type="entry name" value="Ldh_1_C"/>
    <property type="match status" value="1"/>
</dbReference>
<dbReference type="Pfam" id="PF00056">
    <property type="entry name" value="Ldh_1_N"/>
    <property type="match status" value="1"/>
</dbReference>
<dbReference type="PIRSF" id="PIRSF000102">
    <property type="entry name" value="Lac_mal_DH"/>
    <property type="match status" value="1"/>
</dbReference>
<dbReference type="PRINTS" id="PR00086">
    <property type="entry name" value="LLDHDRGNASE"/>
</dbReference>
<dbReference type="SUPFAM" id="SSF56327">
    <property type="entry name" value="LDH C-terminal domain-like"/>
    <property type="match status" value="1"/>
</dbReference>
<dbReference type="SUPFAM" id="SSF51735">
    <property type="entry name" value="NAD(P)-binding Rossmann-fold domains"/>
    <property type="match status" value="1"/>
</dbReference>
<keyword id="KW-0002">3D-structure</keyword>
<keyword id="KW-0520">NAD</keyword>
<keyword id="KW-0560">Oxidoreductase</keyword>
<keyword id="KW-0816">Tricarboxylic acid cycle</keyword>
<gene>
    <name type="primary">mdh</name>
    <name type="ordered locus">PTO0994</name>
</gene>